<accession>Q2RT68</accession>
<proteinExistence type="inferred from homology"/>
<reference key="1">
    <citation type="journal article" date="2011" name="Stand. Genomic Sci.">
        <title>Complete genome sequence of Rhodospirillum rubrum type strain (S1).</title>
        <authorList>
            <person name="Munk A.C."/>
            <person name="Copeland A."/>
            <person name="Lucas S."/>
            <person name="Lapidus A."/>
            <person name="Del Rio T.G."/>
            <person name="Barry K."/>
            <person name="Detter J.C."/>
            <person name="Hammon N."/>
            <person name="Israni S."/>
            <person name="Pitluck S."/>
            <person name="Brettin T."/>
            <person name="Bruce D."/>
            <person name="Han C."/>
            <person name="Tapia R."/>
            <person name="Gilna P."/>
            <person name="Schmutz J."/>
            <person name="Larimer F."/>
            <person name="Land M."/>
            <person name="Kyrpides N.C."/>
            <person name="Mavromatis K."/>
            <person name="Richardson P."/>
            <person name="Rohde M."/>
            <person name="Goeker M."/>
            <person name="Klenk H.P."/>
            <person name="Zhang Y."/>
            <person name="Roberts G.P."/>
            <person name="Reslewic S."/>
            <person name="Schwartz D.C."/>
        </authorList>
    </citation>
    <scope>NUCLEOTIDE SEQUENCE [LARGE SCALE GENOMIC DNA]</scope>
    <source>
        <strain>ATCC 11170 / ATH 1.1.1 / DSM 467 / LMG 4362 / NCIMB 8255 / S1</strain>
    </source>
</reference>
<feature type="chain" id="PRO_1000012265" description="Lipoyl synthase">
    <location>
        <begin position="1"/>
        <end position="314"/>
    </location>
</feature>
<feature type="domain" description="Radical SAM core" evidence="2">
    <location>
        <begin position="65"/>
        <end position="282"/>
    </location>
</feature>
<feature type="region of interest" description="Disordered" evidence="3">
    <location>
        <begin position="1"/>
        <end position="24"/>
    </location>
</feature>
<feature type="region of interest" description="Disordered" evidence="3">
    <location>
        <begin position="294"/>
        <end position="314"/>
    </location>
</feature>
<feature type="compositionally biased region" description="Basic and acidic residues" evidence="3">
    <location>
        <begin position="294"/>
        <end position="308"/>
    </location>
</feature>
<feature type="binding site" evidence="1">
    <location>
        <position position="53"/>
    </location>
    <ligand>
        <name>[4Fe-4S] cluster</name>
        <dbReference type="ChEBI" id="CHEBI:49883"/>
        <label>1</label>
    </ligand>
</feature>
<feature type="binding site" evidence="1">
    <location>
        <position position="58"/>
    </location>
    <ligand>
        <name>[4Fe-4S] cluster</name>
        <dbReference type="ChEBI" id="CHEBI:49883"/>
        <label>1</label>
    </ligand>
</feature>
<feature type="binding site" evidence="1">
    <location>
        <position position="64"/>
    </location>
    <ligand>
        <name>[4Fe-4S] cluster</name>
        <dbReference type="ChEBI" id="CHEBI:49883"/>
        <label>1</label>
    </ligand>
</feature>
<feature type="binding site" evidence="1">
    <location>
        <position position="79"/>
    </location>
    <ligand>
        <name>[4Fe-4S] cluster</name>
        <dbReference type="ChEBI" id="CHEBI:49883"/>
        <label>2</label>
        <note>4Fe-4S-S-AdoMet</note>
    </ligand>
</feature>
<feature type="binding site" evidence="1">
    <location>
        <position position="83"/>
    </location>
    <ligand>
        <name>[4Fe-4S] cluster</name>
        <dbReference type="ChEBI" id="CHEBI:49883"/>
        <label>2</label>
        <note>4Fe-4S-S-AdoMet</note>
    </ligand>
</feature>
<feature type="binding site" evidence="1">
    <location>
        <position position="86"/>
    </location>
    <ligand>
        <name>[4Fe-4S] cluster</name>
        <dbReference type="ChEBI" id="CHEBI:49883"/>
        <label>2</label>
        <note>4Fe-4S-S-AdoMet</note>
    </ligand>
</feature>
<feature type="binding site" evidence="1">
    <location>
        <position position="293"/>
    </location>
    <ligand>
        <name>[4Fe-4S] cluster</name>
        <dbReference type="ChEBI" id="CHEBI:49883"/>
        <label>1</label>
    </ligand>
</feature>
<comment type="function">
    <text evidence="1">Catalyzes the radical-mediated insertion of two sulfur atoms into the C-6 and C-8 positions of the octanoyl moiety bound to the lipoyl domains of lipoate-dependent enzymes, thereby converting the octanoylated domains into lipoylated derivatives.</text>
</comment>
<comment type="catalytic activity">
    <reaction evidence="1">
        <text>[[Fe-S] cluster scaffold protein carrying a second [4Fe-4S](2+) cluster] + N(6)-octanoyl-L-lysyl-[protein] + 2 oxidized [2Fe-2S]-[ferredoxin] + 2 S-adenosyl-L-methionine + 4 H(+) = [[Fe-S] cluster scaffold protein] + N(6)-[(R)-dihydrolipoyl]-L-lysyl-[protein] + 4 Fe(3+) + 2 hydrogen sulfide + 2 5'-deoxyadenosine + 2 L-methionine + 2 reduced [2Fe-2S]-[ferredoxin]</text>
        <dbReference type="Rhea" id="RHEA:16585"/>
        <dbReference type="Rhea" id="RHEA-COMP:9928"/>
        <dbReference type="Rhea" id="RHEA-COMP:10000"/>
        <dbReference type="Rhea" id="RHEA-COMP:10001"/>
        <dbReference type="Rhea" id="RHEA-COMP:10475"/>
        <dbReference type="Rhea" id="RHEA-COMP:14568"/>
        <dbReference type="Rhea" id="RHEA-COMP:14569"/>
        <dbReference type="ChEBI" id="CHEBI:15378"/>
        <dbReference type="ChEBI" id="CHEBI:17319"/>
        <dbReference type="ChEBI" id="CHEBI:29034"/>
        <dbReference type="ChEBI" id="CHEBI:29919"/>
        <dbReference type="ChEBI" id="CHEBI:33722"/>
        <dbReference type="ChEBI" id="CHEBI:33737"/>
        <dbReference type="ChEBI" id="CHEBI:33738"/>
        <dbReference type="ChEBI" id="CHEBI:57844"/>
        <dbReference type="ChEBI" id="CHEBI:59789"/>
        <dbReference type="ChEBI" id="CHEBI:78809"/>
        <dbReference type="ChEBI" id="CHEBI:83100"/>
        <dbReference type="EC" id="2.8.1.8"/>
    </reaction>
</comment>
<comment type="cofactor">
    <cofactor evidence="1">
        <name>[4Fe-4S] cluster</name>
        <dbReference type="ChEBI" id="CHEBI:49883"/>
    </cofactor>
    <text evidence="1">Binds 2 [4Fe-4S] clusters per subunit. One cluster is coordinated with 3 cysteines and an exchangeable S-adenosyl-L-methionine.</text>
</comment>
<comment type="pathway">
    <text evidence="1">Protein modification; protein lipoylation via endogenous pathway; protein N(6)-(lipoyl)lysine from octanoyl-[acyl-carrier-protein]: step 2/2.</text>
</comment>
<comment type="subcellular location">
    <subcellularLocation>
        <location evidence="1">Cytoplasm</location>
    </subcellularLocation>
</comment>
<comment type="similarity">
    <text evidence="1">Belongs to the radical SAM superfamily. Lipoyl synthase family.</text>
</comment>
<organism>
    <name type="scientific">Rhodospirillum rubrum (strain ATCC 11170 / ATH 1.1.1 / DSM 467 / LMG 4362 / NCIMB 8255 / S1)</name>
    <dbReference type="NCBI Taxonomy" id="269796"/>
    <lineage>
        <taxon>Bacteria</taxon>
        <taxon>Pseudomonadati</taxon>
        <taxon>Pseudomonadota</taxon>
        <taxon>Alphaproteobacteria</taxon>
        <taxon>Rhodospirillales</taxon>
        <taxon>Rhodospirillaceae</taxon>
        <taxon>Rhodospirillum</taxon>
    </lineage>
</organism>
<name>LIPA_RHORT</name>
<dbReference type="EC" id="2.8.1.8" evidence="1"/>
<dbReference type="EMBL" id="CP000230">
    <property type="protein sequence ID" value="ABC22677.1"/>
    <property type="molecule type" value="Genomic_DNA"/>
</dbReference>
<dbReference type="RefSeq" id="WP_011389630.1">
    <property type="nucleotide sequence ID" value="NC_007643.1"/>
</dbReference>
<dbReference type="RefSeq" id="YP_426964.1">
    <property type="nucleotide sequence ID" value="NC_007643.1"/>
</dbReference>
<dbReference type="SMR" id="Q2RT68"/>
<dbReference type="STRING" id="269796.Rru_A1877"/>
<dbReference type="EnsemblBacteria" id="ABC22677">
    <property type="protein sequence ID" value="ABC22677"/>
    <property type="gene ID" value="Rru_A1877"/>
</dbReference>
<dbReference type="KEGG" id="rru:Rru_A1877"/>
<dbReference type="PATRIC" id="fig|269796.9.peg.1956"/>
<dbReference type="eggNOG" id="COG0320">
    <property type="taxonomic scope" value="Bacteria"/>
</dbReference>
<dbReference type="HOGENOM" id="CLU_033144_2_1_5"/>
<dbReference type="PhylomeDB" id="Q2RT68"/>
<dbReference type="UniPathway" id="UPA00538">
    <property type="reaction ID" value="UER00593"/>
</dbReference>
<dbReference type="Proteomes" id="UP000001929">
    <property type="component" value="Chromosome"/>
</dbReference>
<dbReference type="GO" id="GO:0005737">
    <property type="term" value="C:cytoplasm"/>
    <property type="evidence" value="ECO:0007669"/>
    <property type="project" value="UniProtKB-SubCell"/>
</dbReference>
<dbReference type="GO" id="GO:0051539">
    <property type="term" value="F:4 iron, 4 sulfur cluster binding"/>
    <property type="evidence" value="ECO:0007669"/>
    <property type="project" value="UniProtKB-UniRule"/>
</dbReference>
<dbReference type="GO" id="GO:0016992">
    <property type="term" value="F:lipoate synthase activity"/>
    <property type="evidence" value="ECO:0007669"/>
    <property type="project" value="UniProtKB-UniRule"/>
</dbReference>
<dbReference type="GO" id="GO:0046872">
    <property type="term" value="F:metal ion binding"/>
    <property type="evidence" value="ECO:0007669"/>
    <property type="project" value="UniProtKB-KW"/>
</dbReference>
<dbReference type="CDD" id="cd01335">
    <property type="entry name" value="Radical_SAM"/>
    <property type="match status" value="1"/>
</dbReference>
<dbReference type="FunFam" id="3.20.20.70:FF:000040">
    <property type="entry name" value="Lipoyl synthase"/>
    <property type="match status" value="1"/>
</dbReference>
<dbReference type="Gene3D" id="3.20.20.70">
    <property type="entry name" value="Aldolase class I"/>
    <property type="match status" value="1"/>
</dbReference>
<dbReference type="HAMAP" id="MF_00206">
    <property type="entry name" value="Lipoyl_synth"/>
    <property type="match status" value="1"/>
</dbReference>
<dbReference type="InterPro" id="IPR013785">
    <property type="entry name" value="Aldolase_TIM"/>
</dbReference>
<dbReference type="InterPro" id="IPR006638">
    <property type="entry name" value="Elp3/MiaA/NifB-like_rSAM"/>
</dbReference>
<dbReference type="InterPro" id="IPR031691">
    <property type="entry name" value="LIAS_N"/>
</dbReference>
<dbReference type="InterPro" id="IPR003698">
    <property type="entry name" value="Lipoyl_synth"/>
</dbReference>
<dbReference type="InterPro" id="IPR007197">
    <property type="entry name" value="rSAM"/>
</dbReference>
<dbReference type="NCBIfam" id="TIGR00510">
    <property type="entry name" value="lipA"/>
    <property type="match status" value="1"/>
</dbReference>
<dbReference type="NCBIfam" id="NF004019">
    <property type="entry name" value="PRK05481.1"/>
    <property type="match status" value="1"/>
</dbReference>
<dbReference type="NCBIfam" id="NF009544">
    <property type="entry name" value="PRK12928.1"/>
    <property type="match status" value="1"/>
</dbReference>
<dbReference type="PANTHER" id="PTHR10949">
    <property type="entry name" value="LIPOYL SYNTHASE"/>
    <property type="match status" value="1"/>
</dbReference>
<dbReference type="PANTHER" id="PTHR10949:SF0">
    <property type="entry name" value="LIPOYL SYNTHASE, MITOCHONDRIAL"/>
    <property type="match status" value="1"/>
</dbReference>
<dbReference type="Pfam" id="PF16881">
    <property type="entry name" value="LIAS_N"/>
    <property type="match status" value="1"/>
</dbReference>
<dbReference type="Pfam" id="PF04055">
    <property type="entry name" value="Radical_SAM"/>
    <property type="match status" value="1"/>
</dbReference>
<dbReference type="PIRSF" id="PIRSF005963">
    <property type="entry name" value="Lipoyl_synth"/>
    <property type="match status" value="1"/>
</dbReference>
<dbReference type="SFLD" id="SFLDF00271">
    <property type="entry name" value="lipoyl_synthase"/>
    <property type="match status" value="1"/>
</dbReference>
<dbReference type="SFLD" id="SFLDG01058">
    <property type="entry name" value="lipoyl_synthase_like"/>
    <property type="match status" value="1"/>
</dbReference>
<dbReference type="SMART" id="SM00729">
    <property type="entry name" value="Elp3"/>
    <property type="match status" value="1"/>
</dbReference>
<dbReference type="SUPFAM" id="SSF102114">
    <property type="entry name" value="Radical SAM enzymes"/>
    <property type="match status" value="1"/>
</dbReference>
<dbReference type="PROSITE" id="PS51918">
    <property type="entry name" value="RADICAL_SAM"/>
    <property type="match status" value="1"/>
</dbReference>
<keyword id="KW-0004">4Fe-4S</keyword>
<keyword id="KW-0963">Cytoplasm</keyword>
<keyword id="KW-0408">Iron</keyword>
<keyword id="KW-0411">Iron-sulfur</keyword>
<keyword id="KW-0479">Metal-binding</keyword>
<keyword id="KW-1185">Reference proteome</keyword>
<keyword id="KW-0949">S-adenosyl-L-methionine</keyword>
<keyword id="KW-0808">Transferase</keyword>
<gene>
    <name evidence="1" type="primary">lipA</name>
    <name type="ordered locus">Rru_A1877</name>
</gene>
<protein>
    <recommendedName>
        <fullName evidence="1">Lipoyl synthase</fullName>
        <ecNumber evidence="1">2.8.1.8</ecNumber>
    </recommendedName>
    <alternativeName>
        <fullName evidence="1">Lip-syn</fullName>
        <shortName evidence="1">LS</shortName>
    </alternativeName>
    <alternativeName>
        <fullName evidence="1">Lipoate synthase</fullName>
    </alternativeName>
    <alternativeName>
        <fullName evidence="1">Lipoic acid synthase</fullName>
    </alternativeName>
    <alternativeName>
        <fullName evidence="1">Sulfur insertion protein LipA</fullName>
    </alternativeName>
</protein>
<evidence type="ECO:0000255" key="1">
    <source>
        <dbReference type="HAMAP-Rule" id="MF_00206"/>
    </source>
</evidence>
<evidence type="ECO:0000255" key="2">
    <source>
        <dbReference type="PROSITE-ProRule" id="PRU01266"/>
    </source>
</evidence>
<evidence type="ECO:0000256" key="3">
    <source>
        <dbReference type="SAM" id="MobiDB-lite"/>
    </source>
</evidence>
<sequence>MMDTPIIRHPEKVRRPDNPSPRKPEWIRVRAPVSHEAAEVRQLMRSKNLFTVCEEAACPNIGECWKRRHATFMILGDICTRACAFCNVRTGKPGHVDDQEPVNLADSVVAMGLKHVVITSVDRDDLADGGAGHFHRCITEVRSRAPSCSIEVLTPDFRDKPQGALARVVEAGPDVFNHNLETVPRLYPTIRPGARYFHSLKLLDRVKTIDPGVFTKSGIMVGLGETREEVLQVMDDMRSAGVDFLTIGQYLQPTLKHVAVDRFVTPDEFKDYADIARGKGFLMVASSPLTRSSHHADRDFEDLRKARQDAAATK</sequence>